<evidence type="ECO:0000250" key="1"/>
<evidence type="ECO:0000255" key="2">
    <source>
        <dbReference type="PROSITE-ProRule" id="PRU00441"/>
    </source>
</evidence>
<evidence type="ECO:0000305" key="3"/>
<protein>
    <recommendedName>
        <fullName>Putative peptide transport system permease protein BAB2_1050</fullName>
    </recommendedName>
</protein>
<reference key="1">
    <citation type="journal article" date="2005" name="Infect. Immun.">
        <title>Whole-genome analyses of speciation events in pathogenic Brucellae.</title>
        <authorList>
            <person name="Chain P.S."/>
            <person name="Comerci D.J."/>
            <person name="Tolmasky M.E."/>
            <person name="Larimer F.W."/>
            <person name="Malfatti S.A."/>
            <person name="Vergez L.M."/>
            <person name="Aguero F."/>
            <person name="Land M.L."/>
            <person name="Ugalde R.A."/>
            <person name="Garcia E."/>
        </authorList>
    </citation>
    <scope>NUCLEOTIDE SEQUENCE [LARGE SCALE GENOMIC DNA]</scope>
    <source>
        <strain>2308</strain>
    </source>
</reference>
<accession>Q2YJK1</accession>
<comment type="function">
    <text evidence="1">Probably part of an ABC transporter complex that could be involved in peptide import. Probably responsible for the translocation of the substrate across the membrane (By similarity).</text>
</comment>
<comment type="subunit">
    <text evidence="3">The complex is composed of two ATP-binding proteins (BAB2_1052 and BAB2_1053), two transmembrane proteins (BAB2_1050 and BAB2_1051) and a solute-binding protein (BAB2_1049).</text>
</comment>
<comment type="subcellular location">
    <subcellularLocation>
        <location evidence="3">Cell inner membrane</location>
        <topology evidence="2">Multi-pass membrane protein</topology>
    </subcellularLocation>
</comment>
<comment type="similarity">
    <text evidence="3">Belongs to the binding-protein-dependent transport system permease family.</text>
</comment>
<name>Y1050_BRUA2</name>
<feature type="chain" id="PRO_0000290146" description="Putative peptide transport system permease protein BAB2_1050">
    <location>
        <begin position="1"/>
        <end position="314"/>
    </location>
</feature>
<feature type="transmembrane region" description="Helical" evidence="2">
    <location>
        <begin position="12"/>
        <end position="32"/>
    </location>
</feature>
<feature type="transmembrane region" description="Helical" evidence="2">
    <location>
        <begin position="101"/>
        <end position="121"/>
    </location>
</feature>
<feature type="transmembrane region" description="Helical" evidence="2">
    <location>
        <begin position="135"/>
        <end position="155"/>
    </location>
</feature>
<feature type="transmembrane region" description="Helical" evidence="2">
    <location>
        <begin position="177"/>
        <end position="197"/>
    </location>
</feature>
<feature type="transmembrane region" description="Helical" evidence="2">
    <location>
        <begin position="237"/>
        <end position="257"/>
    </location>
</feature>
<feature type="transmembrane region" description="Helical" evidence="2">
    <location>
        <begin position="286"/>
        <end position="306"/>
    </location>
</feature>
<feature type="domain" description="ABC transmembrane type-1" evidence="2">
    <location>
        <begin position="95"/>
        <end position="304"/>
    </location>
</feature>
<gene>
    <name type="ordered locus">BAB2_1050</name>
</gene>
<organism>
    <name type="scientific">Brucella abortus (strain 2308)</name>
    <dbReference type="NCBI Taxonomy" id="359391"/>
    <lineage>
        <taxon>Bacteria</taxon>
        <taxon>Pseudomonadati</taxon>
        <taxon>Pseudomonadota</taxon>
        <taxon>Alphaproteobacteria</taxon>
        <taxon>Hyphomicrobiales</taxon>
        <taxon>Brucellaceae</taxon>
        <taxon>Brucella/Ochrobactrum group</taxon>
        <taxon>Brucella</taxon>
    </lineage>
</organism>
<sequence length="314" mass="34288">MTALILKRVAQAIPVMLIVAILTFLLMKLLPGDPAILIAGDGASPETVERIRVELGLDQPTVVQLGQWLWNLFHFDLGRSFLLSQPVSQAIAERLPVTISLALLAFAITIPVGIIMGVVAAYLRDSWFDTGVMSLALLGVSVPSFWLAILAVILFSVTLGWFPSAGYVPFLDSPLGWLRSLILPASILALFQIGYLARMTRSEMLEVMDQDYIRTARSKGVSEYSVLSTHAFRNALVSVLTVSGYIFSLLIGGSVVIEQIFALPGLGRLLVQAILARDLPVVQGTMLFLGFLFVAINVLVDILYTIADPRVRYD</sequence>
<proteinExistence type="inferred from homology"/>
<keyword id="KW-0997">Cell inner membrane</keyword>
<keyword id="KW-1003">Cell membrane</keyword>
<keyword id="KW-0472">Membrane</keyword>
<keyword id="KW-1185">Reference proteome</keyword>
<keyword id="KW-0812">Transmembrane</keyword>
<keyword id="KW-1133">Transmembrane helix</keyword>
<keyword id="KW-0813">Transport</keyword>
<dbReference type="EMBL" id="AM040265">
    <property type="protein sequence ID" value="CAJ13216.1"/>
    <property type="molecule type" value="Genomic_DNA"/>
</dbReference>
<dbReference type="RefSeq" id="WP_002968912.1">
    <property type="nucleotide sequence ID" value="NZ_KN046823.1"/>
</dbReference>
<dbReference type="SMR" id="Q2YJK1"/>
<dbReference type="STRING" id="359391.BAB2_1050"/>
<dbReference type="KEGG" id="bmf:BAB2_1050"/>
<dbReference type="PATRIC" id="fig|359391.11.peg.1837"/>
<dbReference type="HOGENOM" id="CLU_036879_0_1_5"/>
<dbReference type="Proteomes" id="UP000002719">
    <property type="component" value="Chromosome II"/>
</dbReference>
<dbReference type="GO" id="GO:0005886">
    <property type="term" value="C:plasma membrane"/>
    <property type="evidence" value="ECO:0007669"/>
    <property type="project" value="UniProtKB-SubCell"/>
</dbReference>
<dbReference type="GO" id="GO:0071916">
    <property type="term" value="F:dipeptide transmembrane transporter activity"/>
    <property type="evidence" value="ECO:0007669"/>
    <property type="project" value="TreeGrafter"/>
</dbReference>
<dbReference type="CDD" id="cd06261">
    <property type="entry name" value="TM_PBP2"/>
    <property type="match status" value="1"/>
</dbReference>
<dbReference type="Gene3D" id="1.10.3720.10">
    <property type="entry name" value="MetI-like"/>
    <property type="match status" value="1"/>
</dbReference>
<dbReference type="InterPro" id="IPR045621">
    <property type="entry name" value="BPD_transp_1_N"/>
</dbReference>
<dbReference type="InterPro" id="IPR000515">
    <property type="entry name" value="MetI-like"/>
</dbReference>
<dbReference type="InterPro" id="IPR035906">
    <property type="entry name" value="MetI-like_sf"/>
</dbReference>
<dbReference type="PANTHER" id="PTHR43163">
    <property type="entry name" value="DIPEPTIDE TRANSPORT SYSTEM PERMEASE PROTEIN DPPB-RELATED"/>
    <property type="match status" value="1"/>
</dbReference>
<dbReference type="PANTHER" id="PTHR43163:SF6">
    <property type="entry name" value="DIPEPTIDE TRANSPORT SYSTEM PERMEASE PROTEIN DPPB-RELATED"/>
    <property type="match status" value="1"/>
</dbReference>
<dbReference type="Pfam" id="PF00528">
    <property type="entry name" value="BPD_transp_1"/>
    <property type="match status" value="1"/>
</dbReference>
<dbReference type="Pfam" id="PF19300">
    <property type="entry name" value="BPD_transp_1_N"/>
    <property type="match status" value="1"/>
</dbReference>
<dbReference type="SUPFAM" id="SSF161098">
    <property type="entry name" value="MetI-like"/>
    <property type="match status" value="1"/>
</dbReference>
<dbReference type="PROSITE" id="PS50928">
    <property type="entry name" value="ABC_TM1"/>
    <property type="match status" value="1"/>
</dbReference>